<feature type="peptide" id="PRO_0000424800" description="Conotoxin pc6d" evidence="2">
    <location>
        <begin position="1"/>
        <end position="31"/>
    </location>
</feature>
<feature type="disulfide bond" evidence="1">
    <location>
        <begin position="2"/>
        <end position="20"/>
    </location>
</feature>
<feature type="disulfide bond" evidence="1">
    <location>
        <begin position="9"/>
        <end position="25"/>
    </location>
</feature>
<feature type="disulfide bond" evidence="1">
    <location>
        <begin position="19"/>
        <end position="29"/>
    </location>
</feature>
<sequence length="31" mass="3383">KCFEVGEFCGSPMLLGSLCCYPGWCFFVCVG</sequence>
<keyword id="KW-0903">Direct protein sequencing</keyword>
<keyword id="KW-1015">Disulfide bond</keyword>
<keyword id="KW-0960">Knottin</keyword>
<keyword id="KW-0964">Secreted</keyword>
<keyword id="KW-0800">Toxin</keyword>
<dbReference type="ConoServer" id="5861">
    <property type="toxin name" value="Pc6d"/>
</dbReference>
<dbReference type="GO" id="GO:0005576">
    <property type="term" value="C:extracellular region"/>
    <property type="evidence" value="ECO:0007669"/>
    <property type="project" value="UniProtKB-SubCell"/>
</dbReference>
<dbReference type="GO" id="GO:0090729">
    <property type="term" value="F:toxin activity"/>
    <property type="evidence" value="ECO:0007669"/>
    <property type="project" value="UniProtKB-KW"/>
</dbReference>
<proteinExistence type="evidence at protein level"/>
<organism>
    <name type="scientific">Conus pictus</name>
    <name type="common">Cone snail</name>
    <dbReference type="NCBI Taxonomy" id="1042615"/>
    <lineage>
        <taxon>Eukaryota</taxon>
        <taxon>Metazoa</taxon>
        <taxon>Spiralia</taxon>
        <taxon>Lophotrochozoa</taxon>
        <taxon>Mollusca</taxon>
        <taxon>Gastropoda</taxon>
        <taxon>Caenogastropoda</taxon>
        <taxon>Neogastropoda</taxon>
        <taxon>Conoidea</taxon>
        <taxon>Conidae</taxon>
        <taxon>Conus</taxon>
        <taxon>Sciteconus</taxon>
    </lineage>
</organism>
<accession>P0DMA3</accession>
<reference key="1">
    <citation type="journal article" date="2013" name="Peptides">
        <title>Unraveling the peptidome of the South African cone snails Conus pictus and Conus natalis.</title>
        <authorList>
            <person name="Peigneur S."/>
            <person name="Van Der Haegen A."/>
            <person name="Moller C."/>
            <person name="Waelkens E."/>
            <person name="Diego-Garcia E."/>
            <person name="Mari F."/>
            <person name="Naude R."/>
            <person name="Tytgat J."/>
        </authorList>
    </citation>
    <scope>PROTEIN SEQUENCE</scope>
    <scope>SUBCELLULAR LOCATION</scope>
    <scope>MASS SPECTROMETRY</scope>
    <source>
        <tissue>Venom</tissue>
    </source>
</reference>
<name>U6D_CONPB</name>
<evidence type="ECO:0000250" key="1"/>
<evidence type="ECO:0000269" key="2">
    <source>
    </source>
</evidence>
<evidence type="ECO:0000305" key="3"/>
<evidence type="ECO:0000305" key="4">
    <source>
    </source>
</evidence>
<comment type="subcellular location">
    <subcellularLocation>
        <location evidence="2">Secreted</location>
    </subcellularLocation>
</comment>
<comment type="tissue specificity">
    <text evidence="4">Expressed by the venom duct.</text>
</comment>
<comment type="domain">
    <text evidence="3">The cysteine framework is VI/VII (C-C-CC-C-C).</text>
</comment>
<comment type="domain">
    <text evidence="1">The presence of a 'disulfide through disulfide knot' structurally defines this protein as a knottin.</text>
</comment>
<comment type="mass spectrometry" mass="3375.0" method="Electrospray" evidence="2">
    <text>monoisotopic.</text>
</comment>
<comment type="similarity">
    <text evidence="3">Belongs to the conotoxin O1 superfamily.</text>
</comment>
<protein>
    <recommendedName>
        <fullName>Conotoxin pc6d</fullName>
    </recommendedName>
</protein>